<sequence>VEVLMGGSGGELAFIPNELQVNAGEQIVFKNNAGFPHNVIFDEDAVPAGVDVSSISMSEEDLLNAPGETYVVKLDKKGTYRFFCAPHQGIGMSGIVTVN</sequence>
<feature type="chain" id="PRO_0000085567" description="Plastocyanin">
    <location>
        <begin position="1"/>
        <end position="99"/>
    </location>
</feature>
<feature type="domain" description="Plastocyanin-like" evidence="2">
    <location>
        <begin position="1"/>
        <end position="99"/>
    </location>
</feature>
<feature type="binding site" evidence="1">
    <location>
        <position position="37"/>
    </location>
    <ligand>
        <name>Cu cation</name>
        <dbReference type="ChEBI" id="CHEBI:23378"/>
    </ligand>
</feature>
<feature type="binding site" evidence="1">
    <location>
        <position position="84"/>
    </location>
    <ligand>
        <name>Cu cation</name>
        <dbReference type="ChEBI" id="CHEBI:23378"/>
    </ligand>
</feature>
<feature type="binding site" evidence="1">
    <location>
        <position position="87"/>
    </location>
    <ligand>
        <name>Cu cation</name>
        <dbReference type="ChEBI" id="CHEBI:23378"/>
    </ligand>
</feature>
<feature type="binding site" evidence="1">
    <location>
        <position position="92"/>
    </location>
    <ligand>
        <name>Cu cation</name>
        <dbReference type="ChEBI" id="CHEBI:23378"/>
    </ligand>
</feature>
<organism>
    <name type="scientific">Ginkgo biloba</name>
    <name type="common">Ginkgo</name>
    <name type="synonym">Maidenhair tree</name>
    <dbReference type="NCBI Taxonomy" id="3311"/>
    <lineage>
        <taxon>Eukaryota</taxon>
        <taxon>Viridiplantae</taxon>
        <taxon>Streptophyta</taxon>
        <taxon>Embryophyta</taxon>
        <taxon>Tracheophyta</taxon>
        <taxon>Spermatophyta</taxon>
        <taxon>Ginkgoidae</taxon>
        <taxon>Ginkgoales</taxon>
        <taxon>Ginkgoaceae</taxon>
        <taxon>Ginkgo</taxon>
    </lineage>
</organism>
<dbReference type="SMR" id="P84338"/>
<dbReference type="GO" id="GO:0009543">
    <property type="term" value="C:chloroplast thylakoid lumen"/>
    <property type="evidence" value="ECO:0007669"/>
    <property type="project" value="TreeGrafter"/>
</dbReference>
<dbReference type="GO" id="GO:0009535">
    <property type="term" value="C:chloroplast thylakoid membrane"/>
    <property type="evidence" value="ECO:0007669"/>
    <property type="project" value="UniProtKB-SubCell"/>
</dbReference>
<dbReference type="GO" id="GO:0005507">
    <property type="term" value="F:copper ion binding"/>
    <property type="evidence" value="ECO:0007669"/>
    <property type="project" value="InterPro"/>
</dbReference>
<dbReference type="GO" id="GO:0046028">
    <property type="term" value="F:electron transporter, transferring electrons from cytochrome b6/f complex of photosystem II activity"/>
    <property type="evidence" value="ECO:0007669"/>
    <property type="project" value="TreeGrafter"/>
</dbReference>
<dbReference type="CDD" id="cd04219">
    <property type="entry name" value="Plastocyanin"/>
    <property type="match status" value="1"/>
</dbReference>
<dbReference type="Gene3D" id="2.60.40.420">
    <property type="entry name" value="Cupredoxins - blue copper proteins"/>
    <property type="match status" value="1"/>
</dbReference>
<dbReference type="InterPro" id="IPR000923">
    <property type="entry name" value="BlueCu_1"/>
</dbReference>
<dbReference type="InterPro" id="IPR028871">
    <property type="entry name" value="BlueCu_1_BS"/>
</dbReference>
<dbReference type="InterPro" id="IPR001235">
    <property type="entry name" value="Copper_blue_Plastocyanin"/>
</dbReference>
<dbReference type="InterPro" id="IPR008972">
    <property type="entry name" value="Cupredoxin"/>
</dbReference>
<dbReference type="InterPro" id="IPR002387">
    <property type="entry name" value="Plastocyanin"/>
</dbReference>
<dbReference type="NCBIfam" id="TIGR02656">
    <property type="entry name" value="cyanin_plasto"/>
    <property type="match status" value="1"/>
</dbReference>
<dbReference type="PANTHER" id="PTHR34192">
    <property type="entry name" value="PLASTOCYANIN MAJOR ISOFORM, CHLOROPLASTIC-RELATED"/>
    <property type="match status" value="1"/>
</dbReference>
<dbReference type="PANTHER" id="PTHR34192:SF10">
    <property type="entry name" value="PLASTOCYANIN MAJOR ISOFORM, CHLOROPLASTIC-RELATED"/>
    <property type="match status" value="1"/>
</dbReference>
<dbReference type="Pfam" id="PF00127">
    <property type="entry name" value="Copper-bind"/>
    <property type="match status" value="1"/>
</dbReference>
<dbReference type="PRINTS" id="PR00156">
    <property type="entry name" value="COPPERBLUE"/>
</dbReference>
<dbReference type="PRINTS" id="PR00157">
    <property type="entry name" value="PLASTOCYANIN"/>
</dbReference>
<dbReference type="SUPFAM" id="SSF49503">
    <property type="entry name" value="Cupredoxins"/>
    <property type="match status" value="1"/>
</dbReference>
<dbReference type="PROSITE" id="PS00196">
    <property type="entry name" value="COPPER_BLUE"/>
    <property type="match status" value="1"/>
</dbReference>
<name>PLAS_GINBI</name>
<comment type="function">
    <text evidence="1">Participates in electron transfer between P700 and the cytochrome b6-f complex in photosystem I.</text>
</comment>
<comment type="cofactor">
    <cofactor evidence="1">
        <name>Cu(2+)</name>
        <dbReference type="ChEBI" id="CHEBI:29036"/>
    </cofactor>
</comment>
<comment type="subcellular location">
    <subcellularLocation>
        <location evidence="3">Plastid</location>
        <location evidence="3">Chloroplast thylakoid membrane</location>
        <topology evidence="1">Peripheral membrane protein</topology>
        <orientation evidence="1">Lumenal side</orientation>
    </subcellularLocation>
    <text>Loosely bound to the inner thylakoid membrane surface in chloroplasts (By similarity).</text>
</comment>
<comment type="similarity">
    <text evidence="4">Belongs to the plastocyanin family.</text>
</comment>
<proteinExistence type="evidence at protein level"/>
<gene>
    <name type="primary">PETE</name>
</gene>
<accession>P84338</accession>
<protein>
    <recommendedName>
        <fullName>Plastocyanin</fullName>
    </recommendedName>
</protein>
<reference key="1">
    <citation type="journal article" date="2006" name="Protein Pept. Lett.">
        <title>Novel plastocyanin containing phenylalanine-83 from the gymnosperm Ginkgo biloba.</title>
        <authorList>
            <person name="Onodera J."/>
            <person name="Sugimura Y."/>
            <person name="Yoshizaki F."/>
        </authorList>
    </citation>
    <scope>PROTEIN SEQUENCE</scope>
    <scope>SUBCELLULAR LOCATION</scope>
    <source>
        <tissue>Leaf</tissue>
    </source>
</reference>
<keyword id="KW-0150">Chloroplast</keyword>
<keyword id="KW-0186">Copper</keyword>
<keyword id="KW-0903">Direct protein sequencing</keyword>
<keyword id="KW-0249">Electron transport</keyword>
<keyword id="KW-0472">Membrane</keyword>
<keyword id="KW-0479">Metal-binding</keyword>
<keyword id="KW-0934">Plastid</keyword>
<keyword id="KW-0793">Thylakoid</keyword>
<keyword id="KW-0813">Transport</keyword>
<evidence type="ECO:0000250" key="1">
    <source>
        <dbReference type="UniProtKB" id="P18068"/>
    </source>
</evidence>
<evidence type="ECO:0000255" key="2"/>
<evidence type="ECO:0000269" key="3">
    <source>
    </source>
</evidence>
<evidence type="ECO:0000305" key="4"/>